<name>MTNA_THEVB</name>
<feature type="chain" id="PRO_0000357247" description="Methylthioribose-1-phosphate isomerase">
    <location>
        <begin position="1"/>
        <end position="355"/>
    </location>
</feature>
<feature type="active site" description="Proton donor" evidence="1">
    <location>
        <position position="246"/>
    </location>
</feature>
<feature type="binding site" evidence="1">
    <location>
        <begin position="53"/>
        <end position="55"/>
    </location>
    <ligand>
        <name>substrate</name>
    </ligand>
</feature>
<feature type="binding site" evidence="1">
    <location>
        <position position="96"/>
    </location>
    <ligand>
        <name>substrate</name>
    </ligand>
</feature>
<feature type="binding site" evidence="1">
    <location>
        <position position="205"/>
    </location>
    <ligand>
        <name>substrate</name>
    </ligand>
</feature>
<feature type="binding site" evidence="1">
    <location>
        <begin position="256"/>
        <end position="257"/>
    </location>
    <ligand>
        <name>substrate</name>
    </ligand>
</feature>
<feature type="site" description="Transition state stabilizer" evidence="1">
    <location>
        <position position="166"/>
    </location>
</feature>
<gene>
    <name evidence="1" type="primary">mtnA</name>
    <name type="ordered locus">tll1061</name>
</gene>
<sequence>MAVTANVGTIFPVVWAGDRVQLIDQTRLPEQYELREITTAAEMATAIRTMIVRGAPAIGVAAAFGMVLGAREYRGSDREGFLIHLENIASQLRQTRPTAVNLFWAIDRLLAAAQQPTPTLEELQQHLLETAQTIAREDVQTCQAIGKNGLGVLPKTPEKLRLLTHCNAGALATAGYGTALGVVRAAWAAGRLERLYADETRPRLQGAKLTAWECVQEGIPVTLIADTMAAHCMQRGMIDAVVVGADRIALNGDTANKIGTYSVALAAKAHNIPFFVAAPLSTIDTSIATGAEIPIEERHPQEIYQVGFSRITPAGVDFYNPAFDVTPAHLISGIITELGVFAPVDLARGIGAVSG</sequence>
<organism>
    <name type="scientific">Thermosynechococcus vestitus (strain NIES-2133 / IAM M-273 / BP-1)</name>
    <dbReference type="NCBI Taxonomy" id="197221"/>
    <lineage>
        <taxon>Bacteria</taxon>
        <taxon>Bacillati</taxon>
        <taxon>Cyanobacteriota</taxon>
        <taxon>Cyanophyceae</taxon>
        <taxon>Acaryochloridales</taxon>
        <taxon>Thermosynechococcaceae</taxon>
        <taxon>Thermosynechococcus</taxon>
    </lineage>
</organism>
<protein>
    <recommendedName>
        <fullName evidence="1">Methylthioribose-1-phosphate isomerase</fullName>
        <shortName evidence="1">M1Pi</shortName>
        <shortName evidence="1">MTR-1-P isomerase</shortName>
        <ecNumber evidence="1">5.3.1.23</ecNumber>
    </recommendedName>
    <alternativeName>
        <fullName evidence="1">S-methyl-5-thioribose-1-phosphate isomerase</fullName>
    </alternativeName>
</protein>
<accession>Q8DK09</accession>
<keyword id="KW-0028">Amino-acid biosynthesis</keyword>
<keyword id="KW-0413">Isomerase</keyword>
<keyword id="KW-0486">Methionine biosynthesis</keyword>
<keyword id="KW-1185">Reference proteome</keyword>
<proteinExistence type="inferred from homology"/>
<comment type="function">
    <text evidence="1">Catalyzes the interconversion of methylthioribose-1-phosphate (MTR-1-P) into methylthioribulose-1-phosphate (MTRu-1-P).</text>
</comment>
<comment type="catalytic activity">
    <reaction evidence="1">
        <text>5-(methylsulfanyl)-alpha-D-ribose 1-phosphate = 5-(methylsulfanyl)-D-ribulose 1-phosphate</text>
        <dbReference type="Rhea" id="RHEA:19989"/>
        <dbReference type="ChEBI" id="CHEBI:58533"/>
        <dbReference type="ChEBI" id="CHEBI:58548"/>
        <dbReference type="EC" id="5.3.1.23"/>
    </reaction>
</comment>
<comment type="pathway">
    <text evidence="1">Amino-acid biosynthesis; L-methionine biosynthesis via salvage pathway; L-methionine from S-methyl-5-thio-alpha-D-ribose 1-phosphate: step 1/6.</text>
</comment>
<comment type="similarity">
    <text evidence="2">Belongs to the eIF-2B alpha/beta/delta subunits family. MtnA subfamily.</text>
</comment>
<evidence type="ECO:0000255" key="1">
    <source>
        <dbReference type="HAMAP-Rule" id="MF_01678"/>
    </source>
</evidence>
<evidence type="ECO:0000305" key="2"/>
<reference key="1">
    <citation type="journal article" date="2002" name="DNA Res.">
        <title>Complete genome structure of the thermophilic cyanobacterium Thermosynechococcus elongatus BP-1.</title>
        <authorList>
            <person name="Nakamura Y."/>
            <person name="Kaneko T."/>
            <person name="Sato S."/>
            <person name="Ikeuchi M."/>
            <person name="Katoh H."/>
            <person name="Sasamoto S."/>
            <person name="Watanabe A."/>
            <person name="Iriguchi M."/>
            <person name="Kawashima K."/>
            <person name="Kimura T."/>
            <person name="Kishida Y."/>
            <person name="Kiyokawa C."/>
            <person name="Kohara M."/>
            <person name="Matsumoto M."/>
            <person name="Matsuno A."/>
            <person name="Nakazaki N."/>
            <person name="Shimpo S."/>
            <person name="Sugimoto M."/>
            <person name="Takeuchi C."/>
            <person name="Yamada M."/>
            <person name="Tabata S."/>
        </authorList>
    </citation>
    <scope>NUCLEOTIDE SEQUENCE [LARGE SCALE GENOMIC DNA]</scope>
    <source>
        <strain>NIES-2133 / IAM M-273 / BP-1</strain>
    </source>
</reference>
<dbReference type="EC" id="5.3.1.23" evidence="1"/>
<dbReference type="EMBL" id="BA000039">
    <property type="protein sequence ID" value="BAC08614.1"/>
    <property type="molecule type" value="Genomic_DNA"/>
</dbReference>
<dbReference type="RefSeq" id="NP_681852.1">
    <property type="nucleotide sequence ID" value="NC_004113.1"/>
</dbReference>
<dbReference type="RefSeq" id="WP_011056904.1">
    <property type="nucleotide sequence ID" value="NC_004113.1"/>
</dbReference>
<dbReference type="SMR" id="Q8DK09"/>
<dbReference type="STRING" id="197221.gene:10747655"/>
<dbReference type="EnsemblBacteria" id="BAC08614">
    <property type="protein sequence ID" value="BAC08614"/>
    <property type="gene ID" value="BAC08614"/>
</dbReference>
<dbReference type="KEGG" id="tel:tll1061"/>
<dbReference type="PATRIC" id="fig|197221.4.peg.1114"/>
<dbReference type="eggNOG" id="COG0182">
    <property type="taxonomic scope" value="Bacteria"/>
</dbReference>
<dbReference type="UniPathway" id="UPA00904">
    <property type="reaction ID" value="UER00874"/>
</dbReference>
<dbReference type="Proteomes" id="UP000000440">
    <property type="component" value="Chromosome"/>
</dbReference>
<dbReference type="GO" id="GO:0046523">
    <property type="term" value="F:S-methyl-5-thioribose-1-phosphate isomerase activity"/>
    <property type="evidence" value="ECO:0007669"/>
    <property type="project" value="UniProtKB-UniRule"/>
</dbReference>
<dbReference type="GO" id="GO:0019509">
    <property type="term" value="P:L-methionine salvage from methylthioadenosine"/>
    <property type="evidence" value="ECO:0007669"/>
    <property type="project" value="UniProtKB-UniRule"/>
</dbReference>
<dbReference type="FunFam" id="1.20.120.420:FF:000003">
    <property type="entry name" value="Methylthioribose-1-phosphate isomerase"/>
    <property type="match status" value="1"/>
</dbReference>
<dbReference type="FunFam" id="3.40.50.10470:FF:000006">
    <property type="entry name" value="Methylthioribose-1-phosphate isomerase"/>
    <property type="match status" value="1"/>
</dbReference>
<dbReference type="Gene3D" id="1.20.120.420">
    <property type="entry name" value="translation initiation factor eif-2b, domain 1"/>
    <property type="match status" value="1"/>
</dbReference>
<dbReference type="Gene3D" id="3.40.50.10470">
    <property type="entry name" value="Translation initiation factor eif-2b, domain 2"/>
    <property type="match status" value="1"/>
</dbReference>
<dbReference type="HAMAP" id="MF_01678">
    <property type="entry name" value="Salvage_MtnA"/>
    <property type="match status" value="1"/>
</dbReference>
<dbReference type="InterPro" id="IPR000649">
    <property type="entry name" value="IF-2B-related"/>
</dbReference>
<dbReference type="InterPro" id="IPR005251">
    <property type="entry name" value="IF-M1Pi"/>
</dbReference>
<dbReference type="InterPro" id="IPR042529">
    <property type="entry name" value="IF_2B-like_C"/>
</dbReference>
<dbReference type="InterPro" id="IPR011559">
    <property type="entry name" value="Initiation_fac_2B_a/b/d"/>
</dbReference>
<dbReference type="InterPro" id="IPR027363">
    <property type="entry name" value="M1Pi_N"/>
</dbReference>
<dbReference type="InterPro" id="IPR037171">
    <property type="entry name" value="NagB/RpiA_transferase-like"/>
</dbReference>
<dbReference type="NCBIfam" id="TIGR00524">
    <property type="entry name" value="eIF-2B_rel"/>
    <property type="match status" value="1"/>
</dbReference>
<dbReference type="NCBIfam" id="NF004326">
    <property type="entry name" value="PRK05720.1"/>
    <property type="match status" value="1"/>
</dbReference>
<dbReference type="NCBIfam" id="TIGR00512">
    <property type="entry name" value="salvage_mtnA"/>
    <property type="match status" value="1"/>
</dbReference>
<dbReference type="PANTHER" id="PTHR43475">
    <property type="entry name" value="METHYLTHIORIBOSE-1-PHOSPHATE ISOMERASE"/>
    <property type="match status" value="1"/>
</dbReference>
<dbReference type="PANTHER" id="PTHR43475:SF1">
    <property type="entry name" value="METHYLTHIORIBOSE-1-PHOSPHATE ISOMERASE"/>
    <property type="match status" value="1"/>
</dbReference>
<dbReference type="Pfam" id="PF01008">
    <property type="entry name" value="IF-2B"/>
    <property type="match status" value="1"/>
</dbReference>
<dbReference type="SUPFAM" id="SSF100950">
    <property type="entry name" value="NagB/RpiA/CoA transferase-like"/>
    <property type="match status" value="1"/>
</dbReference>